<reference key="1">
    <citation type="journal article" date="2005" name="Genome Res.">
        <title>Comparative and functional genomic analyses of the pathogenicity of phytopathogen Xanthomonas campestris pv. campestris.</title>
        <authorList>
            <person name="Qian W."/>
            <person name="Jia Y."/>
            <person name="Ren S.-X."/>
            <person name="He Y.-Q."/>
            <person name="Feng J.-X."/>
            <person name="Lu L.-F."/>
            <person name="Sun Q."/>
            <person name="Ying G."/>
            <person name="Tang D.-J."/>
            <person name="Tang H."/>
            <person name="Wu W."/>
            <person name="Hao P."/>
            <person name="Wang L."/>
            <person name="Jiang B.-L."/>
            <person name="Zeng S."/>
            <person name="Gu W.-Y."/>
            <person name="Lu G."/>
            <person name="Rong L."/>
            <person name="Tian Y."/>
            <person name="Yao Z."/>
            <person name="Fu G."/>
            <person name="Chen B."/>
            <person name="Fang R."/>
            <person name="Qiang B."/>
            <person name="Chen Z."/>
            <person name="Zhao G.-P."/>
            <person name="Tang J.-L."/>
            <person name="He C."/>
        </authorList>
    </citation>
    <scope>NUCLEOTIDE SEQUENCE [LARGE SCALE GENOMIC DNA]</scope>
    <source>
        <strain>8004</strain>
    </source>
</reference>
<accession>Q4UR70</accession>
<organism>
    <name type="scientific">Xanthomonas campestris pv. campestris (strain 8004)</name>
    <dbReference type="NCBI Taxonomy" id="314565"/>
    <lineage>
        <taxon>Bacteria</taxon>
        <taxon>Pseudomonadati</taxon>
        <taxon>Pseudomonadota</taxon>
        <taxon>Gammaproteobacteria</taxon>
        <taxon>Lysobacterales</taxon>
        <taxon>Lysobacteraceae</taxon>
        <taxon>Xanthomonas</taxon>
    </lineage>
</organism>
<feature type="chain" id="PRO_0000242880" description="Glutamine--tRNA ligase">
    <location>
        <begin position="1"/>
        <end position="579"/>
    </location>
</feature>
<feature type="short sequence motif" description="'HIGH' region" evidence="1">
    <location>
        <begin position="41"/>
        <end position="51"/>
    </location>
</feature>
<feature type="short sequence motif" description="'KMSKS' region" evidence="1">
    <location>
        <begin position="292"/>
        <end position="296"/>
    </location>
</feature>
<feature type="binding site" evidence="1">
    <location>
        <begin position="42"/>
        <end position="44"/>
    </location>
    <ligand>
        <name>ATP</name>
        <dbReference type="ChEBI" id="CHEBI:30616"/>
    </ligand>
</feature>
<feature type="binding site" evidence="1">
    <location>
        <begin position="48"/>
        <end position="54"/>
    </location>
    <ligand>
        <name>ATP</name>
        <dbReference type="ChEBI" id="CHEBI:30616"/>
    </ligand>
</feature>
<feature type="binding site" evidence="1">
    <location>
        <position position="74"/>
    </location>
    <ligand>
        <name>L-glutamine</name>
        <dbReference type="ChEBI" id="CHEBI:58359"/>
    </ligand>
</feature>
<feature type="binding site" evidence="1">
    <location>
        <position position="218"/>
    </location>
    <ligand>
        <name>L-glutamine</name>
        <dbReference type="ChEBI" id="CHEBI:58359"/>
    </ligand>
</feature>
<feature type="binding site" evidence="1">
    <location>
        <position position="237"/>
    </location>
    <ligand>
        <name>ATP</name>
        <dbReference type="ChEBI" id="CHEBI:30616"/>
    </ligand>
</feature>
<feature type="binding site" evidence="1">
    <location>
        <begin position="285"/>
        <end position="286"/>
    </location>
    <ligand>
        <name>ATP</name>
        <dbReference type="ChEBI" id="CHEBI:30616"/>
    </ligand>
</feature>
<feature type="binding site" evidence="1">
    <location>
        <begin position="293"/>
        <end position="295"/>
    </location>
    <ligand>
        <name>ATP</name>
        <dbReference type="ChEBI" id="CHEBI:30616"/>
    </ligand>
</feature>
<keyword id="KW-0030">Aminoacyl-tRNA synthetase</keyword>
<keyword id="KW-0067">ATP-binding</keyword>
<keyword id="KW-0963">Cytoplasm</keyword>
<keyword id="KW-0436">Ligase</keyword>
<keyword id="KW-0547">Nucleotide-binding</keyword>
<keyword id="KW-0648">Protein biosynthesis</keyword>
<name>SYQ_XANC8</name>
<comment type="catalytic activity">
    <reaction evidence="1">
        <text>tRNA(Gln) + L-glutamine + ATP = L-glutaminyl-tRNA(Gln) + AMP + diphosphate</text>
        <dbReference type="Rhea" id="RHEA:20121"/>
        <dbReference type="Rhea" id="RHEA-COMP:9662"/>
        <dbReference type="Rhea" id="RHEA-COMP:9681"/>
        <dbReference type="ChEBI" id="CHEBI:30616"/>
        <dbReference type="ChEBI" id="CHEBI:33019"/>
        <dbReference type="ChEBI" id="CHEBI:58359"/>
        <dbReference type="ChEBI" id="CHEBI:78442"/>
        <dbReference type="ChEBI" id="CHEBI:78521"/>
        <dbReference type="ChEBI" id="CHEBI:456215"/>
        <dbReference type="EC" id="6.1.1.18"/>
    </reaction>
</comment>
<comment type="subunit">
    <text evidence="1">Monomer.</text>
</comment>
<comment type="subcellular location">
    <subcellularLocation>
        <location evidence="1">Cytoplasm</location>
    </subcellularLocation>
</comment>
<comment type="similarity">
    <text evidence="1">Belongs to the class-I aminoacyl-tRNA synthetase family.</text>
</comment>
<proteinExistence type="inferred from homology"/>
<protein>
    <recommendedName>
        <fullName evidence="1">Glutamine--tRNA ligase</fullName>
        <ecNumber evidence="1">6.1.1.18</ecNumber>
    </recommendedName>
    <alternativeName>
        <fullName evidence="1">Glutaminyl-tRNA synthetase</fullName>
        <shortName evidence="1">GlnRS</shortName>
    </alternativeName>
</protein>
<evidence type="ECO:0000255" key="1">
    <source>
        <dbReference type="HAMAP-Rule" id="MF_00126"/>
    </source>
</evidence>
<gene>
    <name evidence="1" type="primary">glnS</name>
    <name type="ordered locus">XC_3409</name>
</gene>
<dbReference type="EC" id="6.1.1.18" evidence="1"/>
<dbReference type="EMBL" id="CP000050">
    <property type="protein sequence ID" value="AAY50453.1"/>
    <property type="molecule type" value="Genomic_DNA"/>
</dbReference>
<dbReference type="RefSeq" id="WP_011036057.1">
    <property type="nucleotide sequence ID" value="NZ_CP155948.1"/>
</dbReference>
<dbReference type="SMR" id="Q4UR70"/>
<dbReference type="KEGG" id="xcb:XC_3409"/>
<dbReference type="HOGENOM" id="CLU_001882_2_3_6"/>
<dbReference type="Proteomes" id="UP000000420">
    <property type="component" value="Chromosome"/>
</dbReference>
<dbReference type="GO" id="GO:0005829">
    <property type="term" value="C:cytosol"/>
    <property type="evidence" value="ECO:0007669"/>
    <property type="project" value="TreeGrafter"/>
</dbReference>
<dbReference type="GO" id="GO:0005524">
    <property type="term" value="F:ATP binding"/>
    <property type="evidence" value="ECO:0007669"/>
    <property type="project" value="UniProtKB-UniRule"/>
</dbReference>
<dbReference type="GO" id="GO:0004819">
    <property type="term" value="F:glutamine-tRNA ligase activity"/>
    <property type="evidence" value="ECO:0007669"/>
    <property type="project" value="UniProtKB-UniRule"/>
</dbReference>
<dbReference type="GO" id="GO:0006425">
    <property type="term" value="P:glutaminyl-tRNA aminoacylation"/>
    <property type="evidence" value="ECO:0007669"/>
    <property type="project" value="TreeGrafter"/>
</dbReference>
<dbReference type="GO" id="GO:0006424">
    <property type="term" value="P:glutamyl-tRNA aminoacylation"/>
    <property type="evidence" value="ECO:0007669"/>
    <property type="project" value="UniProtKB-UniRule"/>
</dbReference>
<dbReference type="FunFam" id="1.10.1160.10:FF:000001">
    <property type="entry name" value="Glutamine--tRNA ligase"/>
    <property type="match status" value="1"/>
</dbReference>
<dbReference type="FunFam" id="2.40.240.10:FF:000020">
    <property type="entry name" value="Glutamine--tRNA ligase"/>
    <property type="match status" value="1"/>
</dbReference>
<dbReference type="FunFam" id="2.40.240.10:FF:000023">
    <property type="entry name" value="Glutamine--tRNA ligase"/>
    <property type="match status" value="1"/>
</dbReference>
<dbReference type="FunFam" id="3.90.800.10:FF:000002">
    <property type="entry name" value="Glutamine--tRNA ligase"/>
    <property type="match status" value="1"/>
</dbReference>
<dbReference type="FunFam" id="3.40.50.620:FF:000037">
    <property type="entry name" value="Glutamine--tRNA ligase cytoplasmic"/>
    <property type="match status" value="1"/>
</dbReference>
<dbReference type="Gene3D" id="1.10.1160.10">
    <property type="entry name" value="Glutamyl-trna Synthetase, Domain 2"/>
    <property type="match status" value="1"/>
</dbReference>
<dbReference type="Gene3D" id="3.90.800.10">
    <property type="entry name" value="Glutamyl-tRNA Synthetase, Domain 3"/>
    <property type="match status" value="1"/>
</dbReference>
<dbReference type="Gene3D" id="3.40.50.620">
    <property type="entry name" value="HUPs"/>
    <property type="match status" value="1"/>
</dbReference>
<dbReference type="Gene3D" id="2.40.240.10">
    <property type="entry name" value="Ribosomal Protein L25, Chain P"/>
    <property type="match status" value="2"/>
</dbReference>
<dbReference type="HAMAP" id="MF_00126">
    <property type="entry name" value="Gln_tRNA_synth"/>
    <property type="match status" value="1"/>
</dbReference>
<dbReference type="InterPro" id="IPR001412">
    <property type="entry name" value="aa-tRNA-synth_I_CS"/>
</dbReference>
<dbReference type="InterPro" id="IPR050132">
    <property type="entry name" value="Gln/Glu-tRNA_Ligase"/>
</dbReference>
<dbReference type="InterPro" id="IPR022861">
    <property type="entry name" value="Gln_tRNA_ligase_bac"/>
</dbReference>
<dbReference type="InterPro" id="IPR000924">
    <property type="entry name" value="Glu/Gln-tRNA-synth"/>
</dbReference>
<dbReference type="InterPro" id="IPR020058">
    <property type="entry name" value="Glu/Gln-tRNA-synth_Ib_cat-dom"/>
</dbReference>
<dbReference type="InterPro" id="IPR020059">
    <property type="entry name" value="Glu/Gln-tRNA-synth_Ib_codon-bd"/>
</dbReference>
<dbReference type="InterPro" id="IPR020061">
    <property type="entry name" value="Glu_tRNA_lig_a-bdl"/>
</dbReference>
<dbReference type="InterPro" id="IPR020056">
    <property type="entry name" value="Rbsml_bL25/Gln-tRNA_synth_N"/>
</dbReference>
<dbReference type="InterPro" id="IPR011035">
    <property type="entry name" value="Ribosomal_bL25/Gln-tRNA_synth"/>
</dbReference>
<dbReference type="InterPro" id="IPR014729">
    <property type="entry name" value="Rossmann-like_a/b/a_fold"/>
</dbReference>
<dbReference type="InterPro" id="IPR049437">
    <property type="entry name" value="tRNA-synt_1c_C2"/>
</dbReference>
<dbReference type="NCBIfam" id="NF011291">
    <property type="entry name" value="PRK14703.1"/>
    <property type="match status" value="1"/>
</dbReference>
<dbReference type="PANTHER" id="PTHR43097:SF5">
    <property type="entry name" value="GLUTAMATE--TRNA LIGASE"/>
    <property type="match status" value="1"/>
</dbReference>
<dbReference type="PANTHER" id="PTHR43097">
    <property type="entry name" value="GLUTAMINE-TRNA LIGASE"/>
    <property type="match status" value="1"/>
</dbReference>
<dbReference type="Pfam" id="PF00749">
    <property type="entry name" value="tRNA-synt_1c"/>
    <property type="match status" value="2"/>
</dbReference>
<dbReference type="Pfam" id="PF03950">
    <property type="entry name" value="tRNA-synt_1c_C"/>
    <property type="match status" value="1"/>
</dbReference>
<dbReference type="Pfam" id="PF20974">
    <property type="entry name" value="tRNA-synt_1c_C2"/>
    <property type="match status" value="1"/>
</dbReference>
<dbReference type="PRINTS" id="PR00987">
    <property type="entry name" value="TRNASYNTHGLU"/>
</dbReference>
<dbReference type="SUPFAM" id="SSF52374">
    <property type="entry name" value="Nucleotidylyl transferase"/>
    <property type="match status" value="1"/>
</dbReference>
<dbReference type="SUPFAM" id="SSF50715">
    <property type="entry name" value="Ribosomal protein L25-like"/>
    <property type="match status" value="1"/>
</dbReference>
<dbReference type="PROSITE" id="PS00178">
    <property type="entry name" value="AA_TRNA_LIGASE_I"/>
    <property type="match status" value="1"/>
</dbReference>
<sequence length="579" mass="65649">MSEIPATDATAPAEKKDFIRQIVREDLASGKHTAIRTRFPPEPNGYLHIGHAKAICLDFGLAAEFGGLCNLRLDDTNPAKEDPEFVVAIQDDVRWLGFEWAQLRHASDYFEVYYLAAEKLIRDGHAFVCDLSAEQVRQYRGTLTEPGRNSPFRERSVDENLDLFRRMRAGEFPDGARTLRAKIDMASGNINLRDPALYRIKHVEHQNTGNAWPIYPMYDFAHSLGDAVEGITHSLCTLEFEDHRPLYDWCVDKVDLSGHPELLAPLLGKGYPKEAAKPRQIEFSRLNINYTVMSKRKLTALVEEQLVDGWDDPRMYTLQGLRRRGYTPAAMRLFVDRVGISKQNSVIDFSVLEGCLREDLDAAAARRMAVIDPLKLVLTNLPEGHTETLQFSNHPKDESFGTREVPFARELWIEREDFAEVPPKGWKRLVPGGEIRLRGAGIARVDEVIKDAAGEIVELRGWLDPESRPGMIGSNRKVKGTIHWVSAVHAVEAEIRLYDRLFSVEKPDDESEGKTYRDYLNPESKRSVRGYVEPSAAQAAPEQAFQFERTGYFVADRRDHSAATPAFNRSVTLRDTWAK</sequence>